<organism>
    <name type="scientific">Gallid herpesvirus 2 (strain Chicken/Md5/ATCC VR-987)</name>
    <name type="common">GaHV-2</name>
    <name type="synonym">Marek's disease herpesvirus type 1</name>
    <dbReference type="NCBI Taxonomy" id="10389"/>
    <lineage>
        <taxon>Viruses</taxon>
        <taxon>Duplodnaviria</taxon>
        <taxon>Heunggongvirae</taxon>
        <taxon>Peploviricota</taxon>
        <taxon>Herviviricetes</taxon>
        <taxon>Herpesvirales</taxon>
        <taxon>Orthoherpesviridae</taxon>
        <taxon>Alphaherpesvirinae</taxon>
        <taxon>Mardivirus</taxon>
        <taxon>Mardivirus gallidalpha2</taxon>
        <taxon>Gallid alphaherpesvirus 2</taxon>
    </lineage>
</organism>
<accession>Q9DGY2</accession>
<evidence type="ECO:0000255" key="1"/>
<evidence type="ECO:0000305" key="2"/>
<name>VG86_GAHVM</name>
<feature type="chain" id="PRO_0000406538" description="Uncharacterized gene 86 protein">
    <location>
        <begin position="1"/>
        <end position="87"/>
    </location>
</feature>
<feature type="transmembrane region" description="Helical" evidence="1">
    <location>
        <begin position="48"/>
        <end position="70"/>
    </location>
</feature>
<comment type="subcellular location">
    <subcellularLocation>
        <location evidence="2">Host membrane</location>
        <topology evidence="2">Single-pass membrane protein</topology>
    </subcellularLocation>
</comment>
<protein>
    <recommendedName>
        <fullName>Uncharacterized gene 86 protein</fullName>
    </recommendedName>
</protein>
<gene>
    <name type="primary">MDV086</name>
    <name type="synonym">MDV098</name>
</gene>
<dbReference type="EMBL" id="AF243438">
    <property type="protein sequence ID" value="AAG14260.1"/>
    <property type="molecule type" value="Genomic_DNA"/>
</dbReference>
<dbReference type="EMBL" id="AF243438">
    <property type="protein sequence ID" value="AAG14281.1"/>
    <property type="molecule type" value="Genomic_DNA"/>
</dbReference>
<dbReference type="Proteomes" id="UP000008072">
    <property type="component" value="Segment"/>
</dbReference>
<dbReference type="GO" id="GO:0033644">
    <property type="term" value="C:host cell membrane"/>
    <property type="evidence" value="ECO:0007669"/>
    <property type="project" value="UniProtKB-SubCell"/>
</dbReference>
<dbReference type="GO" id="GO:0016020">
    <property type="term" value="C:membrane"/>
    <property type="evidence" value="ECO:0007669"/>
    <property type="project" value="UniProtKB-KW"/>
</dbReference>
<reference key="1">
    <citation type="journal article" date="2000" name="J. Virol.">
        <title>The genome of a very virulent Marek's disease virus.</title>
        <authorList>
            <person name="Tulman E.R."/>
            <person name="Afonso C.L."/>
            <person name="Lu Z."/>
            <person name="Zsak L."/>
            <person name="Rock D.L."/>
            <person name="Kutish G.F."/>
        </authorList>
    </citation>
    <scope>NUCLEOTIDE SEQUENCE [LARGE SCALE GENOMIC DNA]</scope>
</reference>
<organismHost>
    <name type="scientific">Gallus gallus</name>
    <name type="common">Chicken</name>
    <dbReference type="NCBI Taxonomy" id="9031"/>
</organismHost>
<sequence>MSWPRGDSKKKKIEGGETLLDNRVARPHHILPLPQIQNCIRERRKKKGIYIPHTLIFWMCPRAMGTAITFEFLQPKAQPRVHRDSPT</sequence>
<keyword id="KW-1043">Host membrane</keyword>
<keyword id="KW-0472">Membrane</keyword>
<keyword id="KW-1185">Reference proteome</keyword>
<keyword id="KW-0812">Transmembrane</keyword>
<keyword id="KW-1133">Transmembrane helix</keyword>
<proteinExistence type="predicted"/>